<reference key="1">
    <citation type="journal article" date="2011" name="Int. J. Pept. Res. Ther.">
        <title>Isolation and characterization of a natriuretic peptide from Crotalus oreganus abyssus (Grand canyon rattlesnake) and its effects on systemic blood pressure and nitrite levels.</title>
        <authorList>
            <person name="Da Silva S.L."/>
            <person name="Almeida J.R."/>
            <person name="Resende L.M."/>
            <person name="Martins W."/>
            <person name="Henriques F.A.F.A."/>
            <person name="Baldasso P.A."/>
            <person name="Soares A.M."/>
            <person name="Taranto A.G."/>
            <person name="Resende R.R."/>
            <person name="Marangoni S."/>
            <person name="Dias-Junior C.A."/>
        </authorList>
    </citation>
    <scope>PROTEIN SEQUENCE</scope>
    <scope>FUNCTION</scope>
    <scope>MASS SPECTROMETRY</scope>
    <scope>SUBCELLULAR LOCATION</scope>
    <source>
        <tissue>Venom</tissue>
    </source>
</reference>
<comment type="function">
    <text evidence="3">Snake venom natriuretic peptide that exhibits hypotensive and vasodepressor activity in rats.</text>
</comment>
<comment type="subcellular location">
    <subcellularLocation>
        <location evidence="3">Secreted</location>
    </subcellularLocation>
</comment>
<comment type="tissue specificity">
    <text evidence="5">Expressed by the venom gland.</text>
</comment>
<comment type="mass spectrometry"/>
<comment type="miscellaneous">
    <text>Negative results: vasodilation does not appear to be mediated by the natriuretic peptide receptor-A (NPR1) (Ref.1).</text>
</comment>
<comment type="similarity">
    <text evidence="2">Belongs to the natriuretic peptide family. Snake NP subfamily.</text>
</comment>
<protein>
    <recommendedName>
        <fullName evidence="4">Natriuretic peptide Coa_NP1</fullName>
    </recommendedName>
</protein>
<keyword id="KW-0903">Direct protein sequencing</keyword>
<keyword id="KW-1015">Disulfide bond</keyword>
<keyword id="KW-0382">Hypotensive agent</keyword>
<keyword id="KW-0964">Secreted</keyword>
<keyword id="KW-0800">Toxin</keyword>
<keyword id="KW-0838">Vasoactive</keyword>
<keyword id="KW-0840">Vasodilator</keyword>
<proteinExistence type="evidence at protein level"/>
<accession>B3EWY3</accession>
<feature type="peptide" id="PRO_0000421177" description="Natriuretic peptide Coa_NP1" evidence="3">
    <location>
        <begin position="1"/>
        <end position="32"/>
    </location>
</feature>
<feature type="disulfide bond" evidence="1">
    <location>
        <begin position="8"/>
        <end position="24"/>
    </location>
</feature>
<organism>
    <name type="scientific">Crotalus lutosus abyssus</name>
    <name type="common">Grand Canyon rattlesnake</name>
    <name type="synonym">Crotalus oreganus abyssus</name>
    <dbReference type="NCBI Taxonomy" id="128077"/>
    <lineage>
        <taxon>Eukaryota</taxon>
        <taxon>Metazoa</taxon>
        <taxon>Chordata</taxon>
        <taxon>Craniata</taxon>
        <taxon>Vertebrata</taxon>
        <taxon>Euteleostomi</taxon>
        <taxon>Lepidosauria</taxon>
        <taxon>Squamata</taxon>
        <taxon>Bifurcata</taxon>
        <taxon>Unidentata</taxon>
        <taxon>Episquamata</taxon>
        <taxon>Toxicofera</taxon>
        <taxon>Serpentes</taxon>
        <taxon>Colubroidea</taxon>
        <taxon>Viperidae</taxon>
        <taxon>Crotalinae</taxon>
        <taxon>Crotalus</taxon>
    </lineage>
</organism>
<name>BNPL1_CROLY</name>
<dbReference type="GO" id="GO:0005576">
    <property type="term" value="C:extracellular region"/>
    <property type="evidence" value="ECO:0007669"/>
    <property type="project" value="UniProtKB-SubCell"/>
</dbReference>
<dbReference type="GO" id="GO:0005179">
    <property type="term" value="F:hormone activity"/>
    <property type="evidence" value="ECO:0007669"/>
    <property type="project" value="InterPro"/>
</dbReference>
<dbReference type="GO" id="GO:0090729">
    <property type="term" value="F:toxin activity"/>
    <property type="evidence" value="ECO:0007669"/>
    <property type="project" value="UniProtKB-KW"/>
</dbReference>
<dbReference type="GO" id="GO:0097746">
    <property type="term" value="P:blood vessel diameter maintenance"/>
    <property type="evidence" value="ECO:0000314"/>
    <property type="project" value="UniProtKB"/>
</dbReference>
<dbReference type="GO" id="GO:0008217">
    <property type="term" value="P:regulation of blood pressure"/>
    <property type="evidence" value="ECO:0000314"/>
    <property type="project" value="UniProtKB"/>
</dbReference>
<dbReference type="GO" id="GO:0042311">
    <property type="term" value="P:vasodilation"/>
    <property type="evidence" value="ECO:0007669"/>
    <property type="project" value="UniProtKB-KW"/>
</dbReference>
<dbReference type="InterPro" id="IPR000663">
    <property type="entry name" value="Natr_peptide"/>
</dbReference>
<dbReference type="InterPro" id="IPR030480">
    <property type="entry name" value="Natr_peptide_CS"/>
</dbReference>
<dbReference type="InterPro" id="IPR002408">
    <property type="entry name" value="Natriuretic_peptide_brain"/>
</dbReference>
<dbReference type="Pfam" id="PF00212">
    <property type="entry name" value="ANP"/>
    <property type="match status" value="1"/>
</dbReference>
<dbReference type="PRINTS" id="PR00712">
    <property type="entry name" value="BNATPEPTIDE"/>
</dbReference>
<dbReference type="PRINTS" id="PR00710">
    <property type="entry name" value="NATPEPTIDES"/>
</dbReference>
<dbReference type="SMART" id="SM00183">
    <property type="entry name" value="NAT_PEP"/>
    <property type="match status" value="1"/>
</dbReference>
<dbReference type="PROSITE" id="PS00263">
    <property type="entry name" value="NATRIURETIC_PEPTIDE"/>
    <property type="match status" value="1"/>
</dbReference>
<sequence>SKRLSNGCFGLKLDRIGAMSGLGCWRLINESK</sequence>
<evidence type="ECO:0000250" key="1">
    <source>
        <dbReference type="UniProtKB" id="P83228"/>
    </source>
</evidence>
<evidence type="ECO:0000255" key="2"/>
<evidence type="ECO:0000269" key="3">
    <source ref="1"/>
</evidence>
<evidence type="ECO:0000303" key="4">
    <source ref="1"/>
</evidence>
<evidence type="ECO:0000305" key="5">
    <source ref="1"/>
</evidence>